<dbReference type="EC" id="1.17.99.3" evidence="3"/>
<dbReference type="EMBL" id="AJ238492">
    <property type="protein sequence ID" value="CAB65251.1"/>
    <property type="molecule type" value="mRNA"/>
</dbReference>
<dbReference type="EMBL" id="BC021339">
    <property type="protein sequence ID" value="AAH21339.1"/>
    <property type="molecule type" value="mRNA"/>
</dbReference>
<dbReference type="CCDS" id="CCDS36801.1"/>
<dbReference type="RefSeq" id="NP_001155139.1">
    <property type="nucleotide sequence ID" value="NM_001161667.1"/>
</dbReference>
<dbReference type="RefSeq" id="NP_444345.2">
    <property type="nucleotide sequence ID" value="NM_053115.2"/>
</dbReference>
<dbReference type="RefSeq" id="XP_006518171.1">
    <property type="nucleotide sequence ID" value="XM_006518108.5"/>
</dbReference>
<dbReference type="SMR" id="Q9QXD1"/>
<dbReference type="FunCoup" id="Q9QXD1">
    <property type="interactions" value="620"/>
</dbReference>
<dbReference type="STRING" id="10090.ENSMUSP00000126464"/>
<dbReference type="CarbonylDB" id="Q9QXD1"/>
<dbReference type="GlyGen" id="Q9QXD1">
    <property type="glycosylation" value="2 sites, 1 O-linked glycan (2 sites)"/>
</dbReference>
<dbReference type="iPTMnet" id="Q9QXD1"/>
<dbReference type="PhosphoSitePlus" id="Q9QXD1"/>
<dbReference type="SwissPalm" id="Q9QXD1"/>
<dbReference type="jPOST" id="Q9QXD1"/>
<dbReference type="PaxDb" id="10090-ENSMUSP00000126464"/>
<dbReference type="PeptideAtlas" id="Q9QXD1"/>
<dbReference type="ProteomicsDB" id="285844"/>
<dbReference type="Antibodypedia" id="31666">
    <property type="antibodies" value="317 antibodies from 32 providers"/>
</dbReference>
<dbReference type="DNASU" id="93732"/>
<dbReference type="Ensembl" id="ENSMUST00000022271.14">
    <property type="protein sequence ID" value="ENSMUSP00000022271.8"/>
    <property type="gene ID" value="ENSMUSG00000021751.14"/>
</dbReference>
<dbReference type="Ensembl" id="ENSMUST00000164598.8">
    <property type="protein sequence ID" value="ENSMUSP00000126464.2"/>
    <property type="gene ID" value="ENSMUSG00000021751.14"/>
</dbReference>
<dbReference type="GeneID" id="93732"/>
<dbReference type="KEGG" id="mmu:93732"/>
<dbReference type="UCSC" id="uc007sey.2">
    <property type="organism name" value="mouse"/>
</dbReference>
<dbReference type="AGR" id="MGI:1934852"/>
<dbReference type="CTD" id="8309"/>
<dbReference type="MGI" id="MGI:1934852">
    <property type="gene designation" value="Acox2"/>
</dbReference>
<dbReference type="VEuPathDB" id="HostDB:ENSMUSG00000021751"/>
<dbReference type="eggNOG" id="KOG0136">
    <property type="taxonomic scope" value="Eukaryota"/>
</dbReference>
<dbReference type="GeneTree" id="ENSGT00940000160985"/>
<dbReference type="HOGENOM" id="CLU_014629_3_1_1"/>
<dbReference type="InParanoid" id="Q9QXD1"/>
<dbReference type="OMA" id="NHGVHCF"/>
<dbReference type="OrthoDB" id="538336at2759"/>
<dbReference type="PhylomeDB" id="Q9QXD1"/>
<dbReference type="TreeFam" id="TF300672"/>
<dbReference type="Reactome" id="R-MMU-193368">
    <property type="pathway name" value="Synthesis of bile acids and bile salts via 7alpha-hydroxycholesterol"/>
</dbReference>
<dbReference type="Reactome" id="R-MMU-389887">
    <property type="pathway name" value="Beta-oxidation of pristanoyl-CoA"/>
</dbReference>
<dbReference type="Reactome" id="R-MMU-9033241">
    <property type="pathway name" value="Peroxisomal protein import"/>
</dbReference>
<dbReference type="BioGRID-ORCS" id="93732">
    <property type="hits" value="0 hits in 78 CRISPR screens"/>
</dbReference>
<dbReference type="ChiTaRS" id="Acox2">
    <property type="organism name" value="mouse"/>
</dbReference>
<dbReference type="PRO" id="PR:Q9QXD1"/>
<dbReference type="Proteomes" id="UP000000589">
    <property type="component" value="Chromosome 14"/>
</dbReference>
<dbReference type="RNAct" id="Q9QXD1">
    <property type="molecule type" value="protein"/>
</dbReference>
<dbReference type="Bgee" id="ENSMUSG00000021751">
    <property type="expression patterns" value="Expressed in left lobe of liver and 64 other cell types or tissues"/>
</dbReference>
<dbReference type="ExpressionAtlas" id="Q9QXD1">
    <property type="expression patterns" value="baseline and differential"/>
</dbReference>
<dbReference type="GO" id="GO:0005829">
    <property type="term" value="C:cytosol"/>
    <property type="evidence" value="ECO:0007669"/>
    <property type="project" value="Ensembl"/>
</dbReference>
<dbReference type="GO" id="GO:0005777">
    <property type="term" value="C:peroxisome"/>
    <property type="evidence" value="ECO:0000250"/>
    <property type="project" value="UniProtKB"/>
</dbReference>
<dbReference type="GO" id="GO:0033791">
    <property type="term" value="F:3alpha,7alpha,12alpha-trihydroxy-5beta-cholestanoyl-CoA 24-hydroxylase activity"/>
    <property type="evidence" value="ECO:0000250"/>
    <property type="project" value="UniProtKB"/>
</dbReference>
<dbReference type="GO" id="GO:0003997">
    <property type="term" value="F:acyl-CoA oxidase activity"/>
    <property type="evidence" value="ECO:0007669"/>
    <property type="project" value="InterPro"/>
</dbReference>
<dbReference type="GO" id="GO:0071949">
    <property type="term" value="F:FAD binding"/>
    <property type="evidence" value="ECO:0007669"/>
    <property type="project" value="InterPro"/>
</dbReference>
<dbReference type="GO" id="GO:0005504">
    <property type="term" value="F:fatty acid binding"/>
    <property type="evidence" value="ECO:0007669"/>
    <property type="project" value="InterPro"/>
</dbReference>
<dbReference type="GO" id="GO:0050660">
    <property type="term" value="F:flavin adenine dinucleotide binding"/>
    <property type="evidence" value="ECO:0000250"/>
    <property type="project" value="UniProtKB"/>
</dbReference>
<dbReference type="GO" id="GO:0042803">
    <property type="term" value="F:protein homodimerization activity"/>
    <property type="evidence" value="ECO:0000250"/>
    <property type="project" value="UniProtKB"/>
</dbReference>
<dbReference type="GO" id="GO:0006699">
    <property type="term" value="P:bile acid biosynthetic process"/>
    <property type="evidence" value="ECO:0000250"/>
    <property type="project" value="UniProtKB"/>
</dbReference>
<dbReference type="GO" id="GO:0033540">
    <property type="term" value="P:fatty acid beta-oxidation using acyl-CoA oxidase"/>
    <property type="evidence" value="ECO:0007669"/>
    <property type="project" value="Ensembl"/>
</dbReference>
<dbReference type="CDD" id="cd01150">
    <property type="entry name" value="AXO"/>
    <property type="match status" value="1"/>
</dbReference>
<dbReference type="FunFam" id="1.10.540.10:FF:000006">
    <property type="entry name" value="Acyl-coenzyme A oxidase"/>
    <property type="match status" value="1"/>
</dbReference>
<dbReference type="FunFam" id="1.20.140.10:FF:000005">
    <property type="entry name" value="Acyl-coenzyme A oxidase"/>
    <property type="match status" value="1"/>
</dbReference>
<dbReference type="FunFam" id="1.20.140.10:FF:000007">
    <property type="entry name" value="Acyl-coenzyme A oxidase"/>
    <property type="match status" value="1"/>
</dbReference>
<dbReference type="FunFam" id="2.40.110.10:FF:000003">
    <property type="entry name" value="Acyl-coenzyme A oxidase"/>
    <property type="match status" value="1"/>
</dbReference>
<dbReference type="Gene3D" id="1.10.540.10">
    <property type="entry name" value="Acyl-CoA dehydrogenase/oxidase, N-terminal domain"/>
    <property type="match status" value="1"/>
</dbReference>
<dbReference type="Gene3D" id="2.40.110.10">
    <property type="entry name" value="Butyryl-CoA Dehydrogenase, subunit A, domain 2"/>
    <property type="match status" value="1"/>
</dbReference>
<dbReference type="Gene3D" id="1.20.140.10">
    <property type="entry name" value="Butyryl-CoA Dehydrogenase, subunit A, domain 3"/>
    <property type="match status" value="2"/>
</dbReference>
<dbReference type="InterPro" id="IPR034171">
    <property type="entry name" value="ACO"/>
</dbReference>
<dbReference type="InterPro" id="IPR055060">
    <property type="entry name" value="ACOX_C_alpha1"/>
</dbReference>
<dbReference type="InterPro" id="IPR029320">
    <property type="entry name" value="Acyl-CoA_ox_N"/>
</dbReference>
<dbReference type="InterPro" id="IPR046373">
    <property type="entry name" value="Acyl-CoA_Oxase/DH_mid-dom_sf"/>
</dbReference>
<dbReference type="InterPro" id="IPR012258">
    <property type="entry name" value="Acyl-CoA_oxidase"/>
</dbReference>
<dbReference type="InterPro" id="IPR002655">
    <property type="entry name" value="Acyl-CoA_oxidase_C"/>
</dbReference>
<dbReference type="InterPro" id="IPR036250">
    <property type="entry name" value="AcylCo_DH-like_C"/>
</dbReference>
<dbReference type="InterPro" id="IPR037069">
    <property type="entry name" value="AcylCoA_DH/ox_N_sf"/>
</dbReference>
<dbReference type="InterPro" id="IPR009100">
    <property type="entry name" value="AcylCoA_DH/oxidase_NM_dom_sf"/>
</dbReference>
<dbReference type="PANTHER" id="PTHR10909">
    <property type="entry name" value="ELECTRON TRANSPORT OXIDOREDUCTASE"/>
    <property type="match status" value="1"/>
</dbReference>
<dbReference type="PANTHER" id="PTHR10909:SF344">
    <property type="entry name" value="PEROXISOMAL ACYL-COENZYME A OXIDASE 2"/>
    <property type="match status" value="1"/>
</dbReference>
<dbReference type="Pfam" id="PF01756">
    <property type="entry name" value="ACOX"/>
    <property type="match status" value="1"/>
</dbReference>
<dbReference type="Pfam" id="PF22924">
    <property type="entry name" value="ACOX_C_alpha1"/>
    <property type="match status" value="1"/>
</dbReference>
<dbReference type="Pfam" id="PF14749">
    <property type="entry name" value="Acyl-CoA_ox_N"/>
    <property type="match status" value="1"/>
</dbReference>
<dbReference type="PIRSF" id="PIRSF000168">
    <property type="entry name" value="Acyl-CoA_oxidase"/>
    <property type="match status" value="1"/>
</dbReference>
<dbReference type="SUPFAM" id="SSF47203">
    <property type="entry name" value="Acyl-CoA dehydrogenase C-terminal domain-like"/>
    <property type="match status" value="2"/>
</dbReference>
<dbReference type="SUPFAM" id="SSF56645">
    <property type="entry name" value="Acyl-CoA dehydrogenase NM domain-like"/>
    <property type="match status" value="1"/>
</dbReference>
<proteinExistence type="evidence at protein level"/>
<protein>
    <recommendedName>
        <fullName evidence="4">Peroxisomal acyl-coenzyme A oxidase 2</fullName>
        <ecNumber evidence="3">1.17.99.3</ecNumber>
    </recommendedName>
    <alternativeName>
        <fullName>3-alpha,7-alpha,12-alpha-trihydroxy-5-beta-cholestanoyl-CoA 24-hydroxylase</fullName>
    </alternativeName>
    <alternativeName>
        <fullName evidence="1">3-alpha,7-alpha,12-alpha-trihydroxy-5-beta-cholestanoyl-CoA oxidase</fullName>
    </alternativeName>
    <alternativeName>
        <fullName evidence="3 8">Trihydroxycoprostanoyl-CoA oxidase</fullName>
        <shortName evidence="1">THCA-CoA oxidase</shortName>
        <shortName>THCCox</shortName>
    </alternativeName>
</protein>
<sequence length="681" mass="76863">MGNPGDRVSLGETWSREVHPDIDSERHSPSFSVERLTNILDGGIPNTELRRRVESLIQRDPVFNLKHLYFMTRDELYEDAVQKRFHLEKLAWSLGWSEDGPERIYADRVLAGYNNLNLHGIAMNAIRSLGSDEQIAKWGQLGKNFQIITTYAQTELGHGTYLQGLETEATYDATTQEFVIHSPTMTSIKWWPGDLGRTVTHAVVLAHLICLGARHGMHAFIVPIRSLEDHTPLPGITVGDIGPKMGFENIDNGFLRLNHVRVPRENMLSRFAEVLPDGTYQRLGTPQSNYLGMLVTRVQLLYKGFLPTLQKACTIAVRYAVIRHQSRLRPSDPEAKILEYQTQQQKLLPQLAVSYALHFMTTSLLQFFHSSYSDILKRDFSLLPELHALSTGMKAMSSDFCAQGTEICRRACGGHGYSKLSGLPTLVTQAIASCTYEGENTVLYLQVARFLMKSYLQAQVSPGSIPQKPLPQSVMYLATPRPARCPAQTAADFRCPEVYTTAWAYVSARLIRDATQHTQTLMRSGVDQYDAWNQTSVIHLQAAKAHCYFLTVRNFKEAVEKLDNEPEIQRVLQNLCDLYALNGILTNSGDFLHDGFLSGAQVDMARTAFLDLLPLIRKDAILLTDAFDFSDHCLNSALGCYDGHVYQRLFEWAQKSPANTQENPAYKKYIRPLMQSWKPKL</sequence>
<evidence type="ECO:0000250" key="1">
    <source>
        <dbReference type="UniProtKB" id="O02767"/>
    </source>
</evidence>
<evidence type="ECO:0000250" key="2">
    <source>
        <dbReference type="UniProtKB" id="P07872"/>
    </source>
</evidence>
<evidence type="ECO:0000250" key="3">
    <source>
        <dbReference type="UniProtKB" id="P97562"/>
    </source>
</evidence>
<evidence type="ECO:0000250" key="4">
    <source>
        <dbReference type="UniProtKB" id="Q99424"/>
    </source>
</evidence>
<evidence type="ECO:0000255" key="5"/>
<evidence type="ECO:0000256" key="6">
    <source>
        <dbReference type="SAM" id="MobiDB-lite"/>
    </source>
</evidence>
<evidence type="ECO:0000305" key="7"/>
<evidence type="ECO:0000312" key="8">
    <source>
        <dbReference type="EMBL" id="CAB65251.1"/>
    </source>
</evidence>
<evidence type="ECO:0000312" key="9">
    <source>
        <dbReference type="MGI" id="MGI:1934852"/>
    </source>
</evidence>
<evidence type="ECO:0007744" key="10">
    <source>
    </source>
</evidence>
<feature type="chain" id="PRO_0000204682" description="Peroxisomal acyl-coenzyme A oxidase 2">
    <location>
        <begin position="1"/>
        <end position="681"/>
    </location>
</feature>
<feature type="region of interest" description="Disordered" evidence="6">
    <location>
        <begin position="1"/>
        <end position="28"/>
    </location>
</feature>
<feature type="short sequence motif" description="Microbody targeting signal" evidence="5">
    <location>
        <begin position="679"/>
        <end position="681"/>
    </location>
</feature>
<feature type="compositionally biased region" description="Basic and acidic residues" evidence="6">
    <location>
        <begin position="14"/>
        <end position="28"/>
    </location>
</feature>
<feature type="modified residue" description="Phosphoserine" evidence="4">
    <location>
        <position position="9"/>
    </location>
</feature>
<feature type="modified residue" description="Phosphothreonine" evidence="4">
    <location>
        <position position="13"/>
    </location>
</feature>
<feature type="modified residue" description="N6-succinyllysine" evidence="10">
    <location>
        <position position="66"/>
    </location>
</feature>
<feature type="modified residue" description="N6-succinyllysine" evidence="10">
    <location>
        <position position="137"/>
    </location>
</feature>
<feature type="modified residue" description="N6-succinyllysine" evidence="10">
    <location>
        <position position="303"/>
    </location>
</feature>
<feature type="modified residue" description="N6-succinyllysine" evidence="10">
    <location>
        <position position="453"/>
    </location>
</feature>
<feature type="modified residue" description="N6-succinyllysine" evidence="10">
    <location>
        <position position="561"/>
    </location>
</feature>
<feature type="modified residue" description="N6-succinyllysine" evidence="10">
    <location>
        <position position="667"/>
    </location>
</feature>
<feature type="sequence conflict" description="In Ref. 1; CAB65251." evidence="7" ref="1">
    <original>R</original>
    <variation>W</variation>
    <location>
        <position position="26"/>
    </location>
</feature>
<keyword id="KW-0007">Acetylation</keyword>
<keyword id="KW-0274">FAD</keyword>
<keyword id="KW-0276">Fatty acid metabolism</keyword>
<keyword id="KW-0285">Flavoprotein</keyword>
<keyword id="KW-0443">Lipid metabolism</keyword>
<keyword id="KW-0560">Oxidoreductase</keyword>
<keyword id="KW-0576">Peroxisome</keyword>
<keyword id="KW-0597">Phosphoprotein</keyword>
<keyword id="KW-1185">Reference proteome</keyword>
<comment type="function">
    <text evidence="3">Oxidizes the CoA esters of the bile acid intermediates di- and tri-hydroxycoprostanic acids (By similarity). Capable of oxidizing short as well as long chain 2-methyl branched fatty acids (By similarity).</text>
</comment>
<comment type="catalytic activity">
    <reaction evidence="3">
        <text>(25R)-3alpha,7alpha,12alpha-trihydroxy-5beta-cholestan-26-oyl-CoA + A + H2O = (24R,25R)-3alpha,7alpha,12alpha,24-tetrahydroxy-5beta-cholestan-26-oyl-CoA + AH2</text>
        <dbReference type="Rhea" id="RHEA:15733"/>
        <dbReference type="ChEBI" id="CHEBI:13193"/>
        <dbReference type="ChEBI" id="CHEBI:15377"/>
        <dbReference type="ChEBI" id="CHEBI:17499"/>
        <dbReference type="ChEBI" id="CHEBI:58677"/>
        <dbReference type="ChEBI" id="CHEBI:59807"/>
        <dbReference type="EC" id="1.17.99.3"/>
    </reaction>
    <physiologicalReaction direction="left-to-right" evidence="3">
        <dbReference type="Rhea" id="RHEA:15734"/>
    </physiologicalReaction>
</comment>
<comment type="catalytic activity">
    <reaction evidence="1">
        <text>(25S)-3alpha,7alpha,12alpha-trihydroxy-5beta-cholestan-26-oyl-CoA + O2 = (24E)-3alpha,7alpha,12alpha-trihydroxy-5beta-cholest-24-en-26-oyl-CoA + H2O2</text>
        <dbReference type="Rhea" id="RHEA:46728"/>
        <dbReference type="ChEBI" id="CHEBI:15379"/>
        <dbReference type="ChEBI" id="CHEBI:16240"/>
        <dbReference type="ChEBI" id="CHEBI:59879"/>
        <dbReference type="ChEBI" id="CHEBI:77251"/>
    </reaction>
    <physiologicalReaction direction="left-to-right" evidence="1">
        <dbReference type="Rhea" id="RHEA:46729"/>
    </physiologicalReaction>
</comment>
<comment type="cofactor">
    <cofactor evidence="2">
        <name>FAD</name>
        <dbReference type="ChEBI" id="CHEBI:57692"/>
    </cofactor>
</comment>
<comment type="subunit">
    <text evidence="2">Homodimer.</text>
</comment>
<comment type="subcellular location">
    <subcellularLocation>
        <location evidence="4">Peroxisome</location>
    </subcellularLocation>
</comment>
<comment type="PTM">
    <text>Acetylation of Lys-667 is observed in liver mitochondria from fasted mice but not from fed mice.</text>
</comment>
<comment type="similarity">
    <text evidence="7">Belongs to the acyl-CoA oxidase family.</text>
</comment>
<gene>
    <name evidence="9" type="primary">Acox2</name>
</gene>
<name>ACOX2_MOUSE</name>
<reference key="1">
    <citation type="submission" date="1999-04" db="EMBL/GenBank/DDBJ databases">
        <authorList>
            <person name="Amery L."/>
            <person name="Van Veldhoven P.P."/>
        </authorList>
    </citation>
    <scope>NUCLEOTIDE SEQUENCE [MRNA]</scope>
</reference>
<reference key="2">
    <citation type="journal article" date="2004" name="Genome Res.">
        <title>The status, quality, and expansion of the NIH full-length cDNA project: the Mammalian Gene Collection (MGC).</title>
        <authorList>
            <consortium name="The MGC Project Team"/>
        </authorList>
    </citation>
    <scope>NUCLEOTIDE SEQUENCE [LARGE SCALE MRNA]</scope>
    <source>
        <strain>FVB/N</strain>
        <tissue>Liver</tissue>
    </source>
</reference>
<reference key="3">
    <citation type="journal article" date="2010" name="Cell">
        <title>A tissue-specific atlas of mouse protein phosphorylation and expression.</title>
        <authorList>
            <person name="Huttlin E.L."/>
            <person name="Jedrychowski M.P."/>
            <person name="Elias J.E."/>
            <person name="Goswami T."/>
            <person name="Rad R."/>
            <person name="Beausoleil S.A."/>
            <person name="Villen J."/>
            <person name="Haas W."/>
            <person name="Sowa M.E."/>
            <person name="Gygi S.P."/>
        </authorList>
    </citation>
    <scope>IDENTIFICATION BY MASS SPECTROMETRY [LARGE SCALE ANALYSIS]</scope>
    <source>
        <tissue>Kidney</tissue>
        <tissue>Liver</tissue>
    </source>
</reference>
<reference key="4">
    <citation type="journal article" date="2013" name="Mol. Cell">
        <title>SIRT5-mediated lysine desuccinylation impacts diverse metabolic pathways.</title>
        <authorList>
            <person name="Park J."/>
            <person name="Chen Y."/>
            <person name="Tishkoff D.X."/>
            <person name="Peng C."/>
            <person name="Tan M."/>
            <person name="Dai L."/>
            <person name="Xie Z."/>
            <person name="Zhang Y."/>
            <person name="Zwaans B.M."/>
            <person name="Skinner M.E."/>
            <person name="Lombard D.B."/>
            <person name="Zhao Y."/>
        </authorList>
    </citation>
    <scope>SUCCINYLATION [LARGE SCALE ANALYSIS] AT LYS-66; LYS-137; LYS-303; LYS-453; LYS-561 AND LYS-667</scope>
    <scope>IDENTIFICATION BY MASS SPECTROMETRY [LARGE SCALE ANALYSIS]</scope>
    <source>
        <tissue>Liver</tissue>
    </source>
</reference>
<organism>
    <name type="scientific">Mus musculus</name>
    <name type="common">Mouse</name>
    <dbReference type="NCBI Taxonomy" id="10090"/>
    <lineage>
        <taxon>Eukaryota</taxon>
        <taxon>Metazoa</taxon>
        <taxon>Chordata</taxon>
        <taxon>Craniata</taxon>
        <taxon>Vertebrata</taxon>
        <taxon>Euteleostomi</taxon>
        <taxon>Mammalia</taxon>
        <taxon>Eutheria</taxon>
        <taxon>Euarchontoglires</taxon>
        <taxon>Glires</taxon>
        <taxon>Rodentia</taxon>
        <taxon>Myomorpha</taxon>
        <taxon>Muroidea</taxon>
        <taxon>Muridae</taxon>
        <taxon>Murinae</taxon>
        <taxon>Mus</taxon>
        <taxon>Mus</taxon>
    </lineage>
</organism>
<accession>Q9QXD1</accession>
<accession>Q8VCB0</accession>